<organism>
    <name type="scientific">Pectobacterium carotovorum subsp. carotovorum (strain PC1)</name>
    <dbReference type="NCBI Taxonomy" id="561230"/>
    <lineage>
        <taxon>Bacteria</taxon>
        <taxon>Pseudomonadati</taxon>
        <taxon>Pseudomonadota</taxon>
        <taxon>Gammaproteobacteria</taxon>
        <taxon>Enterobacterales</taxon>
        <taxon>Pectobacteriaceae</taxon>
        <taxon>Pectobacterium</taxon>
    </lineage>
</organism>
<evidence type="ECO:0000255" key="1">
    <source>
        <dbReference type="HAMAP-Rule" id="MF_00715"/>
    </source>
</evidence>
<evidence type="ECO:0000256" key="2">
    <source>
        <dbReference type="SAM" id="MobiDB-lite"/>
    </source>
</evidence>
<name>SLYX_PECCP</name>
<accession>C6DG94</accession>
<comment type="similarity">
    <text evidence="1">Belongs to the SlyX family.</text>
</comment>
<gene>
    <name evidence="1" type="primary">slyX</name>
    <name type="ordered locus">PC1_3842</name>
</gene>
<dbReference type="EMBL" id="CP001657">
    <property type="protein sequence ID" value="ACT14857.1"/>
    <property type="molecule type" value="Genomic_DNA"/>
</dbReference>
<dbReference type="RefSeq" id="WP_015841942.1">
    <property type="nucleotide sequence ID" value="NC_012917.1"/>
</dbReference>
<dbReference type="SMR" id="C6DG94"/>
<dbReference type="STRING" id="561230.PC1_3842"/>
<dbReference type="KEGG" id="pct:PC1_3842"/>
<dbReference type="eggNOG" id="COG2900">
    <property type="taxonomic scope" value="Bacteria"/>
</dbReference>
<dbReference type="HOGENOM" id="CLU_180796_4_2_6"/>
<dbReference type="OrthoDB" id="5771733at2"/>
<dbReference type="Proteomes" id="UP000002736">
    <property type="component" value="Chromosome"/>
</dbReference>
<dbReference type="Gene3D" id="1.20.5.300">
    <property type="match status" value="1"/>
</dbReference>
<dbReference type="HAMAP" id="MF_00715">
    <property type="entry name" value="SlyX"/>
    <property type="match status" value="1"/>
</dbReference>
<dbReference type="InterPro" id="IPR007236">
    <property type="entry name" value="SlyX"/>
</dbReference>
<dbReference type="NCBIfam" id="NF002750">
    <property type="entry name" value="PRK02793.1"/>
    <property type="match status" value="1"/>
</dbReference>
<dbReference type="PANTHER" id="PTHR36508">
    <property type="entry name" value="PROTEIN SLYX"/>
    <property type="match status" value="1"/>
</dbReference>
<dbReference type="PANTHER" id="PTHR36508:SF1">
    <property type="entry name" value="PROTEIN SLYX"/>
    <property type="match status" value="1"/>
</dbReference>
<dbReference type="Pfam" id="PF04102">
    <property type="entry name" value="SlyX"/>
    <property type="match status" value="1"/>
</dbReference>
<feature type="chain" id="PRO_1000212682" description="Protein SlyX">
    <location>
        <begin position="1"/>
        <end position="72"/>
    </location>
</feature>
<feature type="region of interest" description="Disordered" evidence="2">
    <location>
        <begin position="52"/>
        <end position="72"/>
    </location>
</feature>
<feature type="compositionally biased region" description="Polar residues" evidence="2">
    <location>
        <begin position="54"/>
        <end position="66"/>
    </location>
</feature>
<proteinExistence type="inferred from homology"/>
<protein>
    <recommendedName>
        <fullName evidence="1">Protein SlyX</fullName>
    </recommendedName>
</protein>
<sequence>MSPSALEERLEQLESRQAFQEVTIEELNQTVIQHEREISRLREHVRLLTDRVRNQQTSLVAPQSEETPPPHY</sequence>
<reference key="1">
    <citation type="submission" date="2009-07" db="EMBL/GenBank/DDBJ databases">
        <title>Complete sequence of Pectobacterium carotovorum subsp. carotovorum PC1.</title>
        <authorList>
            <consortium name="US DOE Joint Genome Institute"/>
            <person name="Lucas S."/>
            <person name="Copeland A."/>
            <person name="Lapidus A."/>
            <person name="Glavina del Rio T."/>
            <person name="Tice H."/>
            <person name="Bruce D."/>
            <person name="Goodwin L."/>
            <person name="Pitluck S."/>
            <person name="Munk A.C."/>
            <person name="Brettin T."/>
            <person name="Detter J.C."/>
            <person name="Han C."/>
            <person name="Tapia R."/>
            <person name="Larimer F."/>
            <person name="Land M."/>
            <person name="Hauser L."/>
            <person name="Kyrpides N."/>
            <person name="Mikhailova N."/>
            <person name="Balakrishnan V."/>
            <person name="Glasner J."/>
            <person name="Perna N.T."/>
        </authorList>
    </citation>
    <scope>NUCLEOTIDE SEQUENCE [LARGE SCALE GENOMIC DNA]</scope>
    <source>
        <strain>PC1</strain>
    </source>
</reference>